<feature type="chain" id="PRO_0000216460" description="Oxaloacetate decarboxylase gamma chain 1">
    <location>
        <begin position="1"/>
        <end position="79"/>
    </location>
</feature>
<feature type="transmembrane region" description="Helical" evidence="1">
    <location>
        <begin position="12"/>
        <end position="32"/>
    </location>
</feature>
<organism>
    <name type="scientific">Salmonella typhimurium (strain LT2 / SGSC1412 / ATCC 700720)</name>
    <dbReference type="NCBI Taxonomy" id="99287"/>
    <lineage>
        <taxon>Bacteria</taxon>
        <taxon>Pseudomonadati</taxon>
        <taxon>Pseudomonadota</taxon>
        <taxon>Gammaproteobacteria</taxon>
        <taxon>Enterobacterales</taxon>
        <taxon>Enterobacteriaceae</taxon>
        <taxon>Salmonella</taxon>
    </lineage>
</organism>
<evidence type="ECO:0000250" key="1"/>
<evidence type="ECO:0000305" key="2"/>
<comment type="function">
    <text evidence="1">Catalyzes the decarboxylation of oxaloacetate coupled to Na(+) translocation.</text>
</comment>
<comment type="catalytic activity">
    <reaction>
        <text>oxaloacetate + 2 Na(+)(in) + H(+) = pyruvate + 2 Na(+)(out) + CO2</text>
        <dbReference type="Rhea" id="RHEA:57724"/>
        <dbReference type="ChEBI" id="CHEBI:15361"/>
        <dbReference type="ChEBI" id="CHEBI:15378"/>
        <dbReference type="ChEBI" id="CHEBI:16452"/>
        <dbReference type="ChEBI" id="CHEBI:16526"/>
        <dbReference type="ChEBI" id="CHEBI:29101"/>
        <dbReference type="EC" id="7.2.4.2"/>
    </reaction>
</comment>
<comment type="cofactor">
    <cofactor evidence="1">
        <name>Na(+)</name>
        <dbReference type="ChEBI" id="CHEBI:29101"/>
    </cofactor>
</comment>
<comment type="subunit">
    <text evidence="1">Heterotrimer of an alpha, a beta and a gamma subunit.</text>
</comment>
<comment type="subcellular location">
    <subcellularLocation>
        <location evidence="1">Cell membrane</location>
        <topology evidence="1">Single-pass membrane protein</topology>
    </subcellularLocation>
</comment>
<comment type="similarity">
    <text evidence="2">Belongs to the OadG family.</text>
</comment>
<sequence>MNEAVLLGEGFTLMFLGMGFVLSFLFLLIFAIRGMSAVITRFFPEPVAAPAPRAVPVVDDFTRLKPVIAAAIHHHRHHV</sequence>
<proteinExistence type="inferred from homology"/>
<dbReference type="EC" id="7.2.4.2"/>
<dbReference type="EMBL" id="AE006468">
    <property type="protein sequence ID" value="AAL19020.1"/>
    <property type="molecule type" value="Genomic_DNA"/>
</dbReference>
<dbReference type="RefSeq" id="NP_459061.1">
    <property type="nucleotide sequence ID" value="NC_003197.2"/>
</dbReference>
<dbReference type="RefSeq" id="WP_001001154.1">
    <property type="nucleotide sequence ID" value="NC_003197.2"/>
</dbReference>
<dbReference type="SMR" id="P58651"/>
<dbReference type="STRING" id="99287.STM0056"/>
<dbReference type="PaxDb" id="99287-STM0056"/>
<dbReference type="GeneID" id="1251574"/>
<dbReference type="KEGG" id="stm:STM0056"/>
<dbReference type="PATRIC" id="fig|99287.12.peg.58"/>
<dbReference type="HOGENOM" id="CLU_168750_3_2_6"/>
<dbReference type="OMA" id="EGINLMF"/>
<dbReference type="PhylomeDB" id="P58651"/>
<dbReference type="BioCyc" id="SENT99287:STM0056-MONOMER"/>
<dbReference type="Proteomes" id="UP000001014">
    <property type="component" value="Chromosome"/>
</dbReference>
<dbReference type="GO" id="GO:0005886">
    <property type="term" value="C:plasma membrane"/>
    <property type="evidence" value="ECO:0007669"/>
    <property type="project" value="UniProtKB-SubCell"/>
</dbReference>
<dbReference type="GO" id="GO:0015451">
    <property type="term" value="F:decarboxylation-driven active transmembrane transporter activity"/>
    <property type="evidence" value="ECO:0007669"/>
    <property type="project" value="UniProtKB-EC"/>
</dbReference>
<dbReference type="GO" id="GO:0008948">
    <property type="term" value="F:oxaloacetate decarboxylase activity"/>
    <property type="evidence" value="ECO:0007669"/>
    <property type="project" value="UniProtKB-UniRule"/>
</dbReference>
<dbReference type="GO" id="GO:0015081">
    <property type="term" value="F:sodium ion transmembrane transporter activity"/>
    <property type="evidence" value="ECO:0007669"/>
    <property type="project" value="UniProtKB-UniRule"/>
</dbReference>
<dbReference type="GO" id="GO:0036376">
    <property type="term" value="P:sodium ion export across plasma membrane"/>
    <property type="evidence" value="ECO:0007669"/>
    <property type="project" value="InterPro"/>
</dbReference>
<dbReference type="HAMAP" id="MF_00404">
    <property type="entry name" value="OadG"/>
    <property type="match status" value="1"/>
</dbReference>
<dbReference type="InterPro" id="IPR005899">
    <property type="entry name" value="Na_pump_deCOase"/>
</dbReference>
<dbReference type="InterPro" id="IPR023424">
    <property type="entry name" value="OadG"/>
</dbReference>
<dbReference type="NCBIfam" id="TIGR01195">
    <property type="entry name" value="oadG_fam"/>
    <property type="match status" value="1"/>
</dbReference>
<dbReference type="NCBIfam" id="NF002792">
    <property type="entry name" value="PRK02919.1"/>
    <property type="match status" value="1"/>
</dbReference>
<dbReference type="Pfam" id="PF04277">
    <property type="entry name" value="OAD_gamma"/>
    <property type="match status" value="1"/>
</dbReference>
<name>OADG1_SALTY</name>
<accession>P58651</accession>
<gene>
    <name type="primary">oadG1</name>
    <name type="ordered locus">STM0056</name>
</gene>
<keyword id="KW-1003">Cell membrane</keyword>
<keyword id="KW-0406">Ion transport</keyword>
<keyword id="KW-0472">Membrane</keyword>
<keyword id="KW-1185">Reference proteome</keyword>
<keyword id="KW-0915">Sodium</keyword>
<keyword id="KW-0739">Sodium transport</keyword>
<keyword id="KW-1278">Translocase</keyword>
<keyword id="KW-0812">Transmembrane</keyword>
<keyword id="KW-1133">Transmembrane helix</keyword>
<keyword id="KW-0813">Transport</keyword>
<protein>
    <recommendedName>
        <fullName>Oxaloacetate decarboxylase gamma chain 1</fullName>
        <ecNumber>7.2.4.2</ecNumber>
    </recommendedName>
</protein>
<reference key="1">
    <citation type="journal article" date="2001" name="Nature">
        <title>Complete genome sequence of Salmonella enterica serovar Typhimurium LT2.</title>
        <authorList>
            <person name="McClelland M."/>
            <person name="Sanderson K.E."/>
            <person name="Spieth J."/>
            <person name="Clifton S.W."/>
            <person name="Latreille P."/>
            <person name="Courtney L."/>
            <person name="Porwollik S."/>
            <person name="Ali J."/>
            <person name="Dante M."/>
            <person name="Du F."/>
            <person name="Hou S."/>
            <person name="Layman D."/>
            <person name="Leonard S."/>
            <person name="Nguyen C."/>
            <person name="Scott K."/>
            <person name="Holmes A."/>
            <person name="Grewal N."/>
            <person name="Mulvaney E."/>
            <person name="Ryan E."/>
            <person name="Sun H."/>
            <person name="Florea L."/>
            <person name="Miller W."/>
            <person name="Stoneking T."/>
            <person name="Nhan M."/>
            <person name="Waterston R."/>
            <person name="Wilson R.K."/>
        </authorList>
    </citation>
    <scope>NUCLEOTIDE SEQUENCE [LARGE SCALE GENOMIC DNA]</scope>
    <source>
        <strain>LT2 / SGSC1412 / ATCC 700720</strain>
    </source>
</reference>